<gene>
    <name evidence="1" type="primary">hemA1</name>
    <name type="ordered locus">Noca_0494</name>
</gene>
<proteinExistence type="inferred from homology"/>
<comment type="function">
    <text evidence="1">Catalyzes the NADPH-dependent reduction of glutamyl-tRNA(Glu) to glutamate 1-semialdehyde (GSA).</text>
</comment>
<comment type="catalytic activity">
    <reaction evidence="1">
        <text>(S)-4-amino-5-oxopentanoate + tRNA(Glu) + NADP(+) = L-glutamyl-tRNA(Glu) + NADPH + H(+)</text>
        <dbReference type="Rhea" id="RHEA:12344"/>
        <dbReference type="Rhea" id="RHEA-COMP:9663"/>
        <dbReference type="Rhea" id="RHEA-COMP:9680"/>
        <dbReference type="ChEBI" id="CHEBI:15378"/>
        <dbReference type="ChEBI" id="CHEBI:57501"/>
        <dbReference type="ChEBI" id="CHEBI:57783"/>
        <dbReference type="ChEBI" id="CHEBI:58349"/>
        <dbReference type="ChEBI" id="CHEBI:78442"/>
        <dbReference type="ChEBI" id="CHEBI:78520"/>
        <dbReference type="EC" id="1.2.1.70"/>
    </reaction>
</comment>
<comment type="pathway">
    <text evidence="1">Porphyrin-containing compound metabolism; protoporphyrin-IX biosynthesis; 5-aminolevulinate from L-glutamyl-tRNA(Glu): step 1/2.</text>
</comment>
<comment type="subunit">
    <text evidence="1">Homodimer.</text>
</comment>
<comment type="domain">
    <text evidence="1">Possesses an unusual extended V-shaped dimeric structure with each monomer consisting of three distinct domains arranged along a curved 'spinal' alpha-helix. The N-terminal catalytic domain specifically recognizes the glutamate moiety of the substrate. The second domain is the NADPH-binding domain, and the third C-terminal domain is responsible for dimerization.</text>
</comment>
<comment type="miscellaneous">
    <text evidence="1">During catalysis, the active site Cys acts as a nucleophile attacking the alpha-carbonyl group of tRNA-bound glutamate with the formation of a thioester intermediate between enzyme and glutamate, and the concomitant release of tRNA(Glu). The thioester intermediate is finally reduced by direct hydride transfer from NADPH, to form the product GSA.</text>
</comment>
<comment type="similarity">
    <text evidence="1">Belongs to the glutamyl-tRNA reductase family.</text>
</comment>
<reference key="1">
    <citation type="submission" date="2006-12" db="EMBL/GenBank/DDBJ databases">
        <title>Complete sequence of chromosome 1 of Nocardioides sp. JS614.</title>
        <authorList>
            <person name="Copeland A."/>
            <person name="Lucas S."/>
            <person name="Lapidus A."/>
            <person name="Barry K."/>
            <person name="Detter J.C."/>
            <person name="Glavina del Rio T."/>
            <person name="Hammon N."/>
            <person name="Israni S."/>
            <person name="Dalin E."/>
            <person name="Tice H."/>
            <person name="Pitluck S."/>
            <person name="Thompson L.S."/>
            <person name="Brettin T."/>
            <person name="Bruce D."/>
            <person name="Han C."/>
            <person name="Tapia R."/>
            <person name="Schmutz J."/>
            <person name="Larimer F."/>
            <person name="Land M."/>
            <person name="Hauser L."/>
            <person name="Kyrpides N."/>
            <person name="Kim E."/>
            <person name="Mattes T."/>
            <person name="Gossett J."/>
            <person name="Richardson P."/>
        </authorList>
    </citation>
    <scope>NUCLEOTIDE SEQUENCE [LARGE SCALE GENOMIC DNA]</scope>
    <source>
        <strain>ATCC BAA-499 / JS614</strain>
    </source>
</reference>
<evidence type="ECO:0000255" key="1">
    <source>
        <dbReference type="HAMAP-Rule" id="MF_00087"/>
    </source>
</evidence>
<sequence length="430" mass="44973">MSVLVVGISHKSAPVALLEQLALDGPGLHKLIDDVAASEHVTEATVIATCNRLEIYAEVDRFHGSVEEVSRLVVDRAGERTEAMLPHLYVHYDDGAVSHLFQVVAGLDSMAVGEGQILGQTRAALNAGQEIGTVGPALNVLFQQALRVGKRARAETGIDRAAPSLVSAALDRSRATVGELSGKRVLVVGAGSMAGLATSTVAARGTASVTVVNRTSGNADRLAEEYGARSATLAELAAELAVADVVISCTGATGTLITRDMVAAATVDGRELSILDLALPHDVDPTVADLPGVSLVGLTDLADELRDSDAGQEVEAVRQIVTQEVAAFLSARRQASVTPTVVALRSMATSVVEAEMERLTSRVPGLDDDIRAEVLHTVRRVADKLLHQPTVRVRELANETGAVSYAAALAELFALDQEAVDAVTRPEGLT</sequence>
<dbReference type="EC" id="1.2.1.70" evidence="1"/>
<dbReference type="EMBL" id="CP000509">
    <property type="protein sequence ID" value="ABL80036.1"/>
    <property type="molecule type" value="Genomic_DNA"/>
</dbReference>
<dbReference type="RefSeq" id="WP_011753986.1">
    <property type="nucleotide sequence ID" value="NC_008699.1"/>
</dbReference>
<dbReference type="SMR" id="A1SE01"/>
<dbReference type="STRING" id="196162.Noca_0494"/>
<dbReference type="KEGG" id="nca:Noca_0494"/>
<dbReference type="eggNOG" id="COG0373">
    <property type="taxonomic scope" value="Bacteria"/>
</dbReference>
<dbReference type="HOGENOM" id="CLU_035113_4_0_11"/>
<dbReference type="OrthoDB" id="110209at2"/>
<dbReference type="UniPathway" id="UPA00251">
    <property type="reaction ID" value="UER00316"/>
</dbReference>
<dbReference type="Proteomes" id="UP000000640">
    <property type="component" value="Chromosome"/>
</dbReference>
<dbReference type="GO" id="GO:0008883">
    <property type="term" value="F:glutamyl-tRNA reductase activity"/>
    <property type="evidence" value="ECO:0007669"/>
    <property type="project" value="UniProtKB-UniRule"/>
</dbReference>
<dbReference type="GO" id="GO:0050661">
    <property type="term" value="F:NADP binding"/>
    <property type="evidence" value="ECO:0007669"/>
    <property type="project" value="InterPro"/>
</dbReference>
<dbReference type="GO" id="GO:0019353">
    <property type="term" value="P:protoporphyrinogen IX biosynthetic process from glutamate"/>
    <property type="evidence" value="ECO:0007669"/>
    <property type="project" value="TreeGrafter"/>
</dbReference>
<dbReference type="CDD" id="cd05213">
    <property type="entry name" value="NAD_bind_Glutamyl_tRNA_reduct"/>
    <property type="match status" value="1"/>
</dbReference>
<dbReference type="FunFam" id="3.30.460.30:FF:000001">
    <property type="entry name" value="Glutamyl-tRNA reductase"/>
    <property type="match status" value="1"/>
</dbReference>
<dbReference type="Gene3D" id="3.30.460.30">
    <property type="entry name" value="Glutamyl-tRNA reductase, N-terminal domain"/>
    <property type="match status" value="1"/>
</dbReference>
<dbReference type="Gene3D" id="3.40.50.720">
    <property type="entry name" value="NAD(P)-binding Rossmann-like Domain"/>
    <property type="match status" value="1"/>
</dbReference>
<dbReference type="HAMAP" id="MF_00087">
    <property type="entry name" value="Glu_tRNA_reductase"/>
    <property type="match status" value="1"/>
</dbReference>
<dbReference type="InterPro" id="IPR000343">
    <property type="entry name" value="4pyrrol_synth_GluRdtase"/>
</dbReference>
<dbReference type="InterPro" id="IPR015896">
    <property type="entry name" value="4pyrrol_synth_GluRdtase_dimer"/>
</dbReference>
<dbReference type="InterPro" id="IPR015895">
    <property type="entry name" value="4pyrrol_synth_GluRdtase_N"/>
</dbReference>
<dbReference type="InterPro" id="IPR036453">
    <property type="entry name" value="GluRdtase_dimer_dom_sf"/>
</dbReference>
<dbReference type="InterPro" id="IPR036343">
    <property type="entry name" value="GluRdtase_N_sf"/>
</dbReference>
<dbReference type="InterPro" id="IPR036291">
    <property type="entry name" value="NAD(P)-bd_dom_sf"/>
</dbReference>
<dbReference type="InterPro" id="IPR006151">
    <property type="entry name" value="Shikm_DH/Glu-tRNA_Rdtase"/>
</dbReference>
<dbReference type="NCBIfam" id="TIGR01035">
    <property type="entry name" value="hemA"/>
    <property type="match status" value="1"/>
</dbReference>
<dbReference type="NCBIfam" id="NF000744">
    <property type="entry name" value="PRK00045.1-3"/>
    <property type="match status" value="1"/>
</dbReference>
<dbReference type="PANTHER" id="PTHR43013">
    <property type="entry name" value="GLUTAMYL-TRNA REDUCTASE"/>
    <property type="match status" value="1"/>
</dbReference>
<dbReference type="PANTHER" id="PTHR43013:SF1">
    <property type="entry name" value="GLUTAMYL-TRNA REDUCTASE"/>
    <property type="match status" value="1"/>
</dbReference>
<dbReference type="Pfam" id="PF00745">
    <property type="entry name" value="GlutR_dimer"/>
    <property type="match status" value="1"/>
</dbReference>
<dbReference type="Pfam" id="PF05201">
    <property type="entry name" value="GlutR_N"/>
    <property type="match status" value="1"/>
</dbReference>
<dbReference type="Pfam" id="PF01488">
    <property type="entry name" value="Shikimate_DH"/>
    <property type="match status" value="1"/>
</dbReference>
<dbReference type="PIRSF" id="PIRSF000445">
    <property type="entry name" value="4pyrrol_synth_GluRdtase"/>
    <property type="match status" value="1"/>
</dbReference>
<dbReference type="SUPFAM" id="SSF69742">
    <property type="entry name" value="Glutamyl tRNA-reductase catalytic, N-terminal domain"/>
    <property type="match status" value="1"/>
</dbReference>
<dbReference type="SUPFAM" id="SSF69075">
    <property type="entry name" value="Glutamyl tRNA-reductase dimerization domain"/>
    <property type="match status" value="1"/>
</dbReference>
<dbReference type="SUPFAM" id="SSF51735">
    <property type="entry name" value="NAD(P)-binding Rossmann-fold domains"/>
    <property type="match status" value="1"/>
</dbReference>
<feature type="chain" id="PRO_0000335055" description="Glutamyl-tRNA reductase 1">
    <location>
        <begin position="1"/>
        <end position="430"/>
    </location>
</feature>
<feature type="active site" description="Nucleophile" evidence="1">
    <location>
        <position position="50"/>
    </location>
</feature>
<feature type="binding site" evidence="1">
    <location>
        <begin position="49"/>
        <end position="52"/>
    </location>
    <ligand>
        <name>substrate</name>
    </ligand>
</feature>
<feature type="binding site" evidence="1">
    <location>
        <position position="109"/>
    </location>
    <ligand>
        <name>substrate</name>
    </ligand>
</feature>
<feature type="binding site" evidence="1">
    <location>
        <begin position="114"/>
        <end position="116"/>
    </location>
    <ligand>
        <name>substrate</name>
    </ligand>
</feature>
<feature type="binding site" evidence="1">
    <location>
        <position position="120"/>
    </location>
    <ligand>
        <name>substrate</name>
    </ligand>
</feature>
<feature type="binding site" evidence="1">
    <location>
        <begin position="189"/>
        <end position="194"/>
    </location>
    <ligand>
        <name>NADP(+)</name>
        <dbReference type="ChEBI" id="CHEBI:58349"/>
    </ligand>
</feature>
<feature type="site" description="Important for activity" evidence="1">
    <location>
        <position position="99"/>
    </location>
</feature>
<keyword id="KW-0521">NADP</keyword>
<keyword id="KW-0560">Oxidoreductase</keyword>
<keyword id="KW-0627">Porphyrin biosynthesis</keyword>
<keyword id="KW-1185">Reference proteome</keyword>
<organism>
    <name type="scientific">Nocardioides sp. (strain ATCC BAA-499 / JS614)</name>
    <dbReference type="NCBI Taxonomy" id="196162"/>
    <lineage>
        <taxon>Bacteria</taxon>
        <taxon>Bacillati</taxon>
        <taxon>Actinomycetota</taxon>
        <taxon>Actinomycetes</taxon>
        <taxon>Propionibacteriales</taxon>
        <taxon>Nocardioidaceae</taxon>
        <taxon>Nocardioides</taxon>
    </lineage>
</organism>
<accession>A1SE01</accession>
<protein>
    <recommendedName>
        <fullName evidence="1">Glutamyl-tRNA reductase 1</fullName>
        <shortName evidence="1">GluTR 1</shortName>
        <ecNumber evidence="1">1.2.1.70</ecNumber>
    </recommendedName>
</protein>
<name>HEM11_NOCSJ</name>